<accession>Q8S8H9</accession>
<accession>A0MJT0</accession>
<accession>P82725</accession>
<accession>Q1PF66</accession>
<sequence>MKNSFRFSFTVITTFIICVLVSGAMVNGQCSFPQPVGPNGKCVPKDCKSLCHKKYKGGSICTTGKPNICMCLVCRRRSPEV</sequence>
<dbReference type="EMBL" id="AC006248">
    <property type="protein sequence ID" value="AAM15218.1"/>
    <property type="molecule type" value="Genomic_DNA"/>
</dbReference>
<dbReference type="EMBL" id="CP002685">
    <property type="protein sequence ID" value="AEC06415.1"/>
    <property type="molecule type" value="Genomic_DNA"/>
</dbReference>
<dbReference type="EMBL" id="DQ446500">
    <property type="protein sequence ID" value="ABE65813.1"/>
    <property type="molecule type" value="mRNA"/>
</dbReference>
<dbReference type="EMBL" id="DQ912229">
    <property type="protein sequence ID" value="ABK27943.1"/>
    <property type="status" value="ALT_SEQ"/>
    <property type="molecule type" value="mRNA"/>
</dbReference>
<dbReference type="EMBL" id="EF182807">
    <property type="status" value="NOT_ANNOTATED_CDS"/>
    <property type="molecule type" value="mRNA"/>
</dbReference>
<dbReference type="RefSeq" id="NP_565375.1">
    <property type="nucleotide sequence ID" value="NM_127114.2"/>
</dbReference>
<dbReference type="SMR" id="Q8S8H9"/>
<dbReference type="PaxDb" id="3702-AT2G15535.1"/>
<dbReference type="ProteomicsDB" id="223998"/>
<dbReference type="EnsemblPlants" id="AT2G15535.1">
    <property type="protein sequence ID" value="AT2G15535.1"/>
    <property type="gene ID" value="AT2G15535"/>
</dbReference>
<dbReference type="GeneID" id="816046"/>
<dbReference type="Gramene" id="AT2G15535.1">
    <property type="protein sequence ID" value="AT2G15535.1"/>
    <property type="gene ID" value="AT2G15535"/>
</dbReference>
<dbReference type="KEGG" id="ath:AT2G15535"/>
<dbReference type="Araport" id="AT2G15535"/>
<dbReference type="TAIR" id="AT2G15535">
    <property type="gene designation" value="LCR10"/>
</dbReference>
<dbReference type="HOGENOM" id="CLU_2577137_0_0_1"/>
<dbReference type="InParanoid" id="Q8S8H9"/>
<dbReference type="OMA" id="ADTHALN"/>
<dbReference type="PhylomeDB" id="Q8S8H9"/>
<dbReference type="PRO" id="PR:Q8S8H9"/>
<dbReference type="Proteomes" id="UP000006548">
    <property type="component" value="Chromosome 2"/>
</dbReference>
<dbReference type="ExpressionAtlas" id="Q8S8H9">
    <property type="expression patterns" value="baseline and differential"/>
</dbReference>
<dbReference type="GO" id="GO:0005576">
    <property type="term" value="C:extracellular region"/>
    <property type="evidence" value="ECO:0007669"/>
    <property type="project" value="UniProtKB-SubCell"/>
</dbReference>
<dbReference type="GO" id="GO:0050832">
    <property type="term" value="P:defense response to fungus"/>
    <property type="evidence" value="ECO:0007669"/>
    <property type="project" value="UniProtKB-KW"/>
</dbReference>
<dbReference type="GO" id="GO:0031640">
    <property type="term" value="P:killing of cells of another organism"/>
    <property type="evidence" value="ECO:0007669"/>
    <property type="project" value="UniProtKB-KW"/>
</dbReference>
<dbReference type="InterPro" id="IPR010851">
    <property type="entry name" value="DEFL"/>
</dbReference>
<dbReference type="PANTHER" id="PTHR34783">
    <property type="entry name" value="DEFENSIN-LIKE PROTEIN 144-RELATED"/>
    <property type="match status" value="1"/>
</dbReference>
<dbReference type="PANTHER" id="PTHR34783:SF1">
    <property type="entry name" value="DEFENSIN-LIKE PROTEIN 144-RELATED"/>
    <property type="match status" value="1"/>
</dbReference>
<dbReference type="Pfam" id="PF07333">
    <property type="entry name" value="SLR1-BP"/>
    <property type="match status" value="1"/>
</dbReference>
<gene>
    <name type="primary">LCR10</name>
    <name type="ordered locus">At2g15535</name>
    <name type="ORF">F9O13</name>
</gene>
<reference evidence="3" key="1">
    <citation type="journal article" date="1999" name="Nature">
        <title>Sequence and analysis of chromosome 2 of the plant Arabidopsis thaliana.</title>
        <authorList>
            <person name="Lin X."/>
            <person name="Kaul S."/>
            <person name="Rounsley S.D."/>
            <person name="Shea T.P."/>
            <person name="Benito M.-I."/>
            <person name="Town C.D."/>
            <person name="Fujii C.Y."/>
            <person name="Mason T.M."/>
            <person name="Bowman C.L."/>
            <person name="Barnstead M.E."/>
            <person name="Feldblyum T.V."/>
            <person name="Buell C.R."/>
            <person name="Ketchum K.A."/>
            <person name="Lee J.J."/>
            <person name="Ronning C.M."/>
            <person name="Koo H.L."/>
            <person name="Moffat K.S."/>
            <person name="Cronin L.A."/>
            <person name="Shen M."/>
            <person name="Pai G."/>
            <person name="Van Aken S."/>
            <person name="Umayam L."/>
            <person name="Tallon L.J."/>
            <person name="Gill J.E."/>
            <person name="Adams M.D."/>
            <person name="Carrera A.J."/>
            <person name="Creasy T.H."/>
            <person name="Goodman H.M."/>
            <person name="Somerville C.R."/>
            <person name="Copenhaver G.P."/>
            <person name="Preuss D."/>
            <person name="Nierman W.C."/>
            <person name="White O."/>
            <person name="Eisen J.A."/>
            <person name="Salzberg S.L."/>
            <person name="Fraser C.M."/>
            <person name="Venter J.C."/>
        </authorList>
    </citation>
    <scope>NUCLEOTIDE SEQUENCE [LARGE SCALE GENOMIC DNA]</scope>
    <source>
        <strain evidence="4">cv. Columbia</strain>
    </source>
</reference>
<reference key="2">
    <citation type="journal article" date="2017" name="Plant J.">
        <title>Araport11: a complete reannotation of the Arabidopsis thaliana reference genome.</title>
        <authorList>
            <person name="Cheng C.Y."/>
            <person name="Krishnakumar V."/>
            <person name="Chan A.P."/>
            <person name="Thibaud-Nissen F."/>
            <person name="Schobel S."/>
            <person name="Town C.D."/>
        </authorList>
    </citation>
    <scope>GENOME REANNOTATION</scope>
    <source>
        <strain>cv. Columbia</strain>
    </source>
</reference>
<reference key="3">
    <citation type="journal article" date="2006" name="Plant Biotechnol. J.">
        <title>Simultaneous high-throughput recombinational cloning of open reading frames in closed and open configurations.</title>
        <authorList>
            <person name="Underwood B.A."/>
            <person name="Vanderhaeghen R."/>
            <person name="Whitford R."/>
            <person name="Town C.D."/>
            <person name="Hilson P."/>
        </authorList>
    </citation>
    <scope>NUCLEOTIDE SEQUENCE [LARGE SCALE MRNA]</scope>
    <source>
        <strain>cv. Columbia</strain>
    </source>
</reference>
<reference key="4">
    <citation type="journal article" date="2007" name="Plant J.">
        <title>Small cysteine-rich peptides resembling antimicrobial peptides have been under-predicted in plants.</title>
        <authorList>
            <person name="Silverstein K.A.T."/>
            <person name="Moskal W.A. Jr."/>
            <person name="Wu H.C."/>
            <person name="Underwood B.A."/>
            <person name="Graham M.A."/>
            <person name="Town C.D."/>
            <person name="VandenBosch K.A."/>
        </authorList>
    </citation>
    <scope>NUCLEOTIDE SEQUENCE [LARGE SCALE MRNA]</scope>
    <source>
        <strain>cv. Columbia</strain>
    </source>
</reference>
<reference evidence="3" key="5">
    <citation type="journal article" date="2001" name="Plant Mol. Biol.">
        <title>Two large Arabidopsis thaliana gene families are homologous to the Brassica gene superfamily that encodes pollen coat proteins and the male component of the self-incompatibility response.</title>
        <authorList>
            <person name="Vanoosthuyse V."/>
            <person name="Miege C."/>
            <person name="Dumas C."/>
            <person name="Cock J.M."/>
        </authorList>
    </citation>
    <scope>IDENTIFICATION</scope>
</reference>
<reference key="6">
    <citation type="journal article" date="2005" name="Plant Physiol.">
        <title>Genome organization of more than 300 defensin-like genes in Arabidopsis.</title>
        <authorList>
            <person name="Silverstein K.A.T."/>
            <person name="Graham M.A."/>
            <person name="Paape T.D."/>
            <person name="VandenBosch K.A."/>
        </authorList>
    </citation>
    <scope>GENE FAMILY</scope>
</reference>
<feature type="signal peptide" evidence="2">
    <location>
        <begin position="1"/>
        <end position="24"/>
    </location>
</feature>
<feature type="chain" id="PRO_0000017252" description="Defensin-like protein 144">
    <location>
        <begin position="25"/>
        <end position="81"/>
    </location>
</feature>
<feature type="disulfide bond" evidence="1">
    <location>
        <begin position="30"/>
        <end position="74"/>
    </location>
</feature>
<feature type="disulfide bond" evidence="1">
    <location>
        <begin position="42"/>
        <end position="61"/>
    </location>
</feature>
<feature type="disulfide bond" evidence="1">
    <location>
        <begin position="47"/>
        <end position="69"/>
    </location>
</feature>
<feature type="disulfide bond" evidence="1">
    <location>
        <begin position="51"/>
        <end position="71"/>
    </location>
</feature>
<proteinExistence type="inferred from homology"/>
<keyword id="KW-0929">Antimicrobial</keyword>
<keyword id="KW-1015">Disulfide bond</keyword>
<keyword id="KW-0295">Fungicide</keyword>
<keyword id="KW-0611">Plant defense</keyword>
<keyword id="KW-1185">Reference proteome</keyword>
<keyword id="KW-0964">Secreted</keyword>
<keyword id="KW-0732">Signal</keyword>
<protein>
    <recommendedName>
        <fullName>Defensin-like protein 144</fullName>
    </recommendedName>
    <alternativeName>
        <fullName>Low-molecular-weight cysteine-rich protein 10</fullName>
        <shortName>Protein LCR10</shortName>
    </alternativeName>
</protein>
<evidence type="ECO:0000250" key="1"/>
<evidence type="ECO:0000255" key="2"/>
<evidence type="ECO:0000305" key="3"/>
<evidence type="ECO:0000312" key="4">
    <source>
        <dbReference type="EMBL" id="AAM15218.1"/>
    </source>
</evidence>
<organism evidence="4">
    <name type="scientific">Arabidopsis thaliana</name>
    <name type="common">Mouse-ear cress</name>
    <dbReference type="NCBI Taxonomy" id="3702"/>
    <lineage>
        <taxon>Eukaryota</taxon>
        <taxon>Viridiplantae</taxon>
        <taxon>Streptophyta</taxon>
        <taxon>Embryophyta</taxon>
        <taxon>Tracheophyta</taxon>
        <taxon>Spermatophyta</taxon>
        <taxon>Magnoliopsida</taxon>
        <taxon>eudicotyledons</taxon>
        <taxon>Gunneridae</taxon>
        <taxon>Pentapetalae</taxon>
        <taxon>rosids</taxon>
        <taxon>malvids</taxon>
        <taxon>Brassicales</taxon>
        <taxon>Brassicaceae</taxon>
        <taxon>Camelineae</taxon>
        <taxon>Arabidopsis</taxon>
    </lineage>
</organism>
<name>DF144_ARATH</name>
<comment type="subcellular location">
    <subcellularLocation>
        <location evidence="1">Secreted</location>
    </subcellularLocation>
</comment>
<comment type="similarity">
    <text evidence="3">Belongs to the DEFL family.</text>
</comment>
<comment type="sequence caution" evidence="3">
    <conflict type="erroneous termination">
        <sequence resource="EMBL-CDS" id="ABK27943"/>
    </conflict>
    <text>Extended C-terminus.</text>
</comment>
<comment type="sequence caution" evidence="3">
    <conflict type="erroneous termination">
        <sequence resource="EMBL" id="EF182807"/>
    </conflict>
    <text>Extended C-terminus.</text>
</comment>